<proteinExistence type="inferred from homology"/>
<gene>
    <name type="ORF">v1g160387</name>
</gene>
<name>LMBD1_NEMVE</name>
<evidence type="ECO:0000250" key="1"/>
<evidence type="ECO:0000255" key="2"/>
<evidence type="ECO:0000305" key="3"/>
<reference key="1">
    <citation type="journal article" date="2007" name="Science">
        <title>Sea anemone genome reveals ancestral eumetazoan gene repertoire and genomic organization.</title>
        <authorList>
            <person name="Putnam N.H."/>
            <person name="Srivastava M."/>
            <person name="Hellsten U."/>
            <person name="Dirks B."/>
            <person name="Chapman J."/>
            <person name="Salamov A."/>
            <person name="Terry A."/>
            <person name="Shapiro H."/>
            <person name="Lindquist E."/>
            <person name="Kapitonov V.V."/>
            <person name="Jurka J."/>
            <person name="Genikhovich G."/>
            <person name="Grigoriev I.V."/>
            <person name="Lucas S.M."/>
            <person name="Steele R.E."/>
            <person name="Finnerty J.R."/>
            <person name="Technau U."/>
            <person name="Martindale M.Q."/>
            <person name="Rokhsar D.S."/>
        </authorList>
    </citation>
    <scope>NUCLEOTIDE SEQUENCE [LARGE SCALE GENOMIC DNA]</scope>
    <source>
        <strain>CH2 X CH6</strain>
    </source>
</reference>
<organism>
    <name type="scientific">Nematostella vectensis</name>
    <name type="common">Starlet sea anemone</name>
    <dbReference type="NCBI Taxonomy" id="45351"/>
    <lineage>
        <taxon>Eukaryota</taxon>
        <taxon>Metazoa</taxon>
        <taxon>Cnidaria</taxon>
        <taxon>Anthozoa</taxon>
        <taxon>Hexacorallia</taxon>
        <taxon>Actiniaria</taxon>
        <taxon>Edwardsiidae</taxon>
        <taxon>Nematostella</taxon>
    </lineage>
</organism>
<comment type="function">
    <text evidence="1">Probable lysosomal cobalamin transporter. Required to export cobalamin from lysosomes allowing its conversion to cofactors (By similarity).</text>
</comment>
<comment type="subcellular location">
    <subcellularLocation>
        <location evidence="1">Lysosome membrane</location>
        <topology evidence="1">Multi-pass membrane protein</topology>
    </subcellularLocation>
</comment>
<comment type="similarity">
    <text evidence="3">Belongs to the LIMR family. LMBRD1 subfamily.</text>
</comment>
<protein>
    <recommendedName>
        <fullName>Probable lysosomal cobalamin transporter</fullName>
    </recommendedName>
</protein>
<dbReference type="EMBL" id="DS469519">
    <property type="protein sequence ID" value="EDO47438.1"/>
    <property type="molecule type" value="Genomic_DNA"/>
</dbReference>
<dbReference type="RefSeq" id="XP_001639501.1">
    <property type="nucleotide sequence ID" value="XM_001639451.1"/>
</dbReference>
<dbReference type="SMR" id="A7RM45"/>
<dbReference type="FunCoup" id="A7RM45">
    <property type="interactions" value="323"/>
</dbReference>
<dbReference type="STRING" id="45351.A7RM45"/>
<dbReference type="EnsemblMetazoa" id="EDO47438">
    <property type="protein sequence ID" value="EDO47438"/>
    <property type="gene ID" value="NEMVEDRAFT_v1g160387"/>
</dbReference>
<dbReference type="KEGG" id="nve:5519625"/>
<dbReference type="eggNOG" id="ENOG502QQ2T">
    <property type="taxonomic scope" value="Eukaryota"/>
</dbReference>
<dbReference type="HOGENOM" id="CLU_028341_1_0_1"/>
<dbReference type="InParanoid" id="A7RM45"/>
<dbReference type="OMA" id="FWAQFVF"/>
<dbReference type="OrthoDB" id="73273at2759"/>
<dbReference type="PhylomeDB" id="A7RM45"/>
<dbReference type="Proteomes" id="UP000001593">
    <property type="component" value="Unassembled WGS sequence"/>
</dbReference>
<dbReference type="GO" id="GO:0005765">
    <property type="term" value="C:lysosomal membrane"/>
    <property type="evidence" value="ECO:0007669"/>
    <property type="project" value="UniProtKB-SubCell"/>
</dbReference>
<dbReference type="GO" id="GO:0005774">
    <property type="term" value="C:vacuolar membrane"/>
    <property type="evidence" value="ECO:0000318"/>
    <property type="project" value="GO_Central"/>
</dbReference>
<dbReference type="GO" id="GO:0031419">
    <property type="term" value="F:cobalamin binding"/>
    <property type="evidence" value="ECO:0007669"/>
    <property type="project" value="UniProtKB-KW"/>
</dbReference>
<dbReference type="GO" id="GO:0072665">
    <property type="term" value="P:protein localization to vacuole"/>
    <property type="evidence" value="ECO:0000318"/>
    <property type="project" value="GO_Central"/>
</dbReference>
<dbReference type="CDD" id="cd14686">
    <property type="entry name" value="bZIP"/>
    <property type="match status" value="1"/>
</dbReference>
<dbReference type="InterPro" id="IPR050854">
    <property type="entry name" value="LMBD1_LysCbl_Transport"/>
</dbReference>
<dbReference type="InterPro" id="IPR006876">
    <property type="entry name" value="LMBR1-like_membr_prot"/>
</dbReference>
<dbReference type="PANTHER" id="PTHR16130:SF2">
    <property type="entry name" value="LYSOSOMAL COBALAMIN TRANSPORT ESCORT PROTEIN LMBD1"/>
    <property type="match status" value="1"/>
</dbReference>
<dbReference type="PANTHER" id="PTHR16130">
    <property type="entry name" value="LYSOSOMAL COBALAMIN TRANSPORTER-RELATED"/>
    <property type="match status" value="1"/>
</dbReference>
<dbReference type="Pfam" id="PF04791">
    <property type="entry name" value="LMBR1"/>
    <property type="match status" value="1"/>
</dbReference>
<feature type="chain" id="PRO_0000365833" description="Probable lysosomal cobalamin transporter">
    <location>
        <begin position="1"/>
        <end position="546"/>
    </location>
</feature>
<feature type="transmembrane region" description="Helical" evidence="2">
    <location>
        <begin position="8"/>
        <end position="28"/>
    </location>
</feature>
<feature type="transmembrane region" description="Helical" evidence="2">
    <location>
        <begin position="48"/>
        <end position="68"/>
    </location>
</feature>
<feature type="transmembrane region" description="Helical" evidence="2">
    <location>
        <begin position="102"/>
        <end position="122"/>
    </location>
</feature>
<feature type="transmembrane region" description="Helical" evidence="2">
    <location>
        <begin position="141"/>
        <end position="161"/>
    </location>
</feature>
<feature type="transmembrane region" description="Helical" evidence="2">
    <location>
        <begin position="189"/>
        <end position="209"/>
    </location>
</feature>
<feature type="transmembrane region" description="Helical" evidence="2">
    <location>
        <begin position="304"/>
        <end position="324"/>
    </location>
</feature>
<feature type="transmembrane region" description="Helical" evidence="2">
    <location>
        <begin position="352"/>
        <end position="372"/>
    </location>
</feature>
<feature type="transmembrane region" description="Helical" evidence="2">
    <location>
        <begin position="407"/>
        <end position="427"/>
    </location>
</feature>
<feature type="transmembrane region" description="Helical" evidence="2">
    <location>
        <begin position="495"/>
        <end position="515"/>
    </location>
</feature>
<feature type="glycosylation site" description="N-linked (GlcNAc...) asparagine" evidence="2">
    <location>
        <position position="167"/>
    </location>
</feature>
<feature type="glycosylation site" description="N-linked (GlcNAc...) asparagine" evidence="2">
    <location>
        <position position="444"/>
    </location>
</feature>
<feature type="glycosylation site" description="N-linked (GlcNAc...) asparagine" evidence="2">
    <location>
        <position position="452"/>
    </location>
</feature>
<feature type="glycosylation site" description="N-linked (GlcNAc...) asparagine" evidence="2">
    <location>
        <position position="459"/>
    </location>
</feature>
<sequence>MTIPHEVLAQGWIPFTVVVVLAILFSWFYIRYYQDHSQSEVSSTITGIIALFIALMTTALVPVDIFLVSYMKNDDGSWKPWSANRMNRDDIEETAVATTYYILYALLAFFVFVIIPFMYFFFEERDEDITTAERACGALKYSIGFLIVASVLLLVGAFAPLKQPPKNVTEWDKRLIFLKDELKSNNGETALSLLIGFLTLIGMLIMITYTAYGMTALPFSLLKGFKSAKTEQESVTRRRSRNQEQARLIKAQYMGGRAMSSRDRRRLSELEKEEHALATRERRLEAAQLGWLNKCLKLLRPFEMVFGAFFLLVALLIFVSLFITCLDKALHSNGYQYGYSLPTPQLPNPINIIMVYAQIVFPLDYCLFLLVVLYFVYSSMAGIRRVGIRCCWIKLFKVRPRRTLPQALLFMCVMLMLIVLSLNVMLFSLAPQYVMYGSQNYRANSTVTSLVNHTGIIQNVTTSHGIAKVCSMEMSSDHCTMTRIAVFLNRFFYKVWFFGACYYWGTWLFLVVFMTGLIYSIVRKRKTVVDEEYDSSDDSDEEMVTA</sequence>
<accession>A7RM45</accession>
<keyword id="KW-0846">Cobalamin</keyword>
<keyword id="KW-0170">Cobalt</keyword>
<keyword id="KW-0325">Glycoprotein</keyword>
<keyword id="KW-0458">Lysosome</keyword>
<keyword id="KW-0472">Membrane</keyword>
<keyword id="KW-1185">Reference proteome</keyword>
<keyword id="KW-0812">Transmembrane</keyword>
<keyword id="KW-1133">Transmembrane helix</keyword>
<keyword id="KW-0813">Transport</keyword>